<protein>
    <recommendedName>
        <fullName evidence="1">Dihydroorotase</fullName>
        <shortName evidence="1">DHOase</shortName>
        <ecNumber evidence="1">3.5.2.3</ecNumber>
    </recommendedName>
</protein>
<sequence length="424" mass="46372">MKLIKNGKVLQNGELQQADILIDGKVIKQIAPAIEPSNGVDIIDAKGHFVSPGFVDVHVHLREPGGEYKETIETGTKAAARGGFTTVCPMPNTRPVPDSVEHFEALQKLIDDNAQVRVLPYASITTRQLGKELVDFPALVKEGAFAFTDDGVGVQTASMMYEGMIEAAKVNKAIVAHCEDNSLIYGGAMHEGKRSKELGIPGIPNICESVQIARDVLLAEAAGCHYHVCHVSTKESVRVIRDAKRAGIHVTAEVTPHHLLLTEDDIPGNNAIYKMNPPLRSTEDREALLEGLLDGTIDCIATDHAPHARDEKAQPMEKAPFGIVGSETAFPLLYTHFVKNGDWTLQQLVDYLTIKPCETFNLEYGTLKENGYADLTIIDLDSEQEIKGEDFLSKADNTPFIGYKVYGNPILTMVEGEVKFEGDK</sequence>
<gene>
    <name evidence="1" type="primary">pyrC</name>
    <name type="ordered locus">SAS1135</name>
</gene>
<feature type="chain" id="PRO_0000147250" description="Dihydroorotase">
    <location>
        <begin position="1"/>
        <end position="424"/>
    </location>
</feature>
<feature type="active site" evidence="1">
    <location>
        <position position="303"/>
    </location>
</feature>
<feature type="binding site" evidence="1">
    <location>
        <position position="58"/>
    </location>
    <ligand>
        <name>Zn(2+)</name>
        <dbReference type="ChEBI" id="CHEBI:29105"/>
        <label>1</label>
    </ligand>
</feature>
<feature type="binding site" evidence="1">
    <location>
        <begin position="60"/>
        <end position="62"/>
    </location>
    <ligand>
        <name>substrate</name>
    </ligand>
</feature>
<feature type="binding site" evidence="1">
    <location>
        <position position="60"/>
    </location>
    <ligand>
        <name>Zn(2+)</name>
        <dbReference type="ChEBI" id="CHEBI:29105"/>
        <label>1</label>
    </ligand>
</feature>
<feature type="binding site" evidence="1">
    <location>
        <position position="92"/>
    </location>
    <ligand>
        <name>substrate</name>
    </ligand>
</feature>
<feature type="binding site" evidence="1">
    <location>
        <position position="150"/>
    </location>
    <ligand>
        <name>Zn(2+)</name>
        <dbReference type="ChEBI" id="CHEBI:29105"/>
        <label>1</label>
    </ligand>
</feature>
<feature type="binding site" evidence="1">
    <location>
        <position position="150"/>
    </location>
    <ligand>
        <name>Zn(2+)</name>
        <dbReference type="ChEBI" id="CHEBI:29105"/>
        <label>2</label>
    </ligand>
</feature>
<feature type="binding site" evidence="1">
    <location>
        <position position="177"/>
    </location>
    <ligand>
        <name>Zn(2+)</name>
        <dbReference type="ChEBI" id="CHEBI:29105"/>
        <label>2</label>
    </ligand>
</feature>
<feature type="binding site" evidence="1">
    <location>
        <position position="230"/>
    </location>
    <ligand>
        <name>Zn(2+)</name>
        <dbReference type="ChEBI" id="CHEBI:29105"/>
        <label>2</label>
    </ligand>
</feature>
<feature type="binding site" evidence="1">
    <location>
        <position position="276"/>
    </location>
    <ligand>
        <name>substrate</name>
    </ligand>
</feature>
<feature type="binding site" evidence="1">
    <location>
        <position position="303"/>
    </location>
    <ligand>
        <name>Zn(2+)</name>
        <dbReference type="ChEBI" id="CHEBI:29105"/>
        <label>1</label>
    </ligand>
</feature>
<feature type="binding site" evidence="1">
    <location>
        <position position="307"/>
    </location>
    <ligand>
        <name>substrate</name>
    </ligand>
</feature>
<feature type="binding site" evidence="1">
    <location>
        <begin position="321"/>
        <end position="322"/>
    </location>
    <ligand>
        <name>substrate</name>
    </ligand>
</feature>
<organism>
    <name type="scientific">Staphylococcus aureus (strain MSSA476)</name>
    <dbReference type="NCBI Taxonomy" id="282459"/>
    <lineage>
        <taxon>Bacteria</taxon>
        <taxon>Bacillati</taxon>
        <taxon>Bacillota</taxon>
        <taxon>Bacilli</taxon>
        <taxon>Bacillales</taxon>
        <taxon>Staphylococcaceae</taxon>
        <taxon>Staphylococcus</taxon>
    </lineage>
</organism>
<name>PYRC_STAAS</name>
<comment type="function">
    <text evidence="1">Catalyzes the reversible cyclization of carbamoyl aspartate to dihydroorotate.</text>
</comment>
<comment type="catalytic activity">
    <reaction evidence="1">
        <text>(S)-dihydroorotate + H2O = N-carbamoyl-L-aspartate + H(+)</text>
        <dbReference type="Rhea" id="RHEA:24296"/>
        <dbReference type="ChEBI" id="CHEBI:15377"/>
        <dbReference type="ChEBI" id="CHEBI:15378"/>
        <dbReference type="ChEBI" id="CHEBI:30864"/>
        <dbReference type="ChEBI" id="CHEBI:32814"/>
        <dbReference type="EC" id="3.5.2.3"/>
    </reaction>
</comment>
<comment type="cofactor">
    <cofactor evidence="1">
        <name>Zn(2+)</name>
        <dbReference type="ChEBI" id="CHEBI:29105"/>
    </cofactor>
    <text evidence="1">Binds 2 Zn(2+) ions per subunit.</text>
</comment>
<comment type="pathway">
    <text evidence="1">Pyrimidine metabolism; UMP biosynthesis via de novo pathway; (S)-dihydroorotate from bicarbonate: step 3/3.</text>
</comment>
<comment type="similarity">
    <text evidence="1">Belongs to the metallo-dependent hydrolases superfamily. DHOase family. Class I DHOase subfamily.</text>
</comment>
<keyword id="KW-0378">Hydrolase</keyword>
<keyword id="KW-0479">Metal-binding</keyword>
<keyword id="KW-0665">Pyrimidine biosynthesis</keyword>
<keyword id="KW-0862">Zinc</keyword>
<evidence type="ECO:0000255" key="1">
    <source>
        <dbReference type="HAMAP-Rule" id="MF_00220"/>
    </source>
</evidence>
<dbReference type="EC" id="3.5.2.3" evidence="1"/>
<dbReference type="EMBL" id="BX571857">
    <property type="protein sequence ID" value="CAG42912.1"/>
    <property type="molecule type" value="Genomic_DNA"/>
</dbReference>
<dbReference type="RefSeq" id="WP_000767028.1">
    <property type="nucleotide sequence ID" value="NC_002953.3"/>
</dbReference>
<dbReference type="SMR" id="Q6GA12"/>
<dbReference type="MEROPS" id="M38.972"/>
<dbReference type="KEGG" id="sas:SAS1135"/>
<dbReference type="HOGENOM" id="CLU_015572_1_0_9"/>
<dbReference type="UniPathway" id="UPA00070">
    <property type="reaction ID" value="UER00117"/>
</dbReference>
<dbReference type="GO" id="GO:0005737">
    <property type="term" value="C:cytoplasm"/>
    <property type="evidence" value="ECO:0007669"/>
    <property type="project" value="TreeGrafter"/>
</dbReference>
<dbReference type="GO" id="GO:0004038">
    <property type="term" value="F:allantoinase activity"/>
    <property type="evidence" value="ECO:0007669"/>
    <property type="project" value="TreeGrafter"/>
</dbReference>
<dbReference type="GO" id="GO:0004151">
    <property type="term" value="F:dihydroorotase activity"/>
    <property type="evidence" value="ECO:0007669"/>
    <property type="project" value="UniProtKB-UniRule"/>
</dbReference>
<dbReference type="GO" id="GO:0008270">
    <property type="term" value="F:zinc ion binding"/>
    <property type="evidence" value="ECO:0007669"/>
    <property type="project" value="UniProtKB-UniRule"/>
</dbReference>
<dbReference type="GO" id="GO:0044205">
    <property type="term" value="P:'de novo' UMP biosynthetic process"/>
    <property type="evidence" value="ECO:0007669"/>
    <property type="project" value="UniProtKB-UniRule"/>
</dbReference>
<dbReference type="GO" id="GO:0006145">
    <property type="term" value="P:purine nucleobase catabolic process"/>
    <property type="evidence" value="ECO:0007669"/>
    <property type="project" value="TreeGrafter"/>
</dbReference>
<dbReference type="CDD" id="cd01317">
    <property type="entry name" value="DHOase_IIa"/>
    <property type="match status" value="1"/>
</dbReference>
<dbReference type="Gene3D" id="3.20.20.140">
    <property type="entry name" value="Metal-dependent hydrolases"/>
    <property type="match status" value="1"/>
</dbReference>
<dbReference type="Gene3D" id="2.30.40.10">
    <property type="entry name" value="Urease, subunit C, domain 1"/>
    <property type="match status" value="2"/>
</dbReference>
<dbReference type="HAMAP" id="MF_00220_B">
    <property type="entry name" value="PyrC_classI_B"/>
    <property type="match status" value="1"/>
</dbReference>
<dbReference type="InterPro" id="IPR006680">
    <property type="entry name" value="Amidohydro-rel"/>
</dbReference>
<dbReference type="InterPro" id="IPR004722">
    <property type="entry name" value="DHOase"/>
</dbReference>
<dbReference type="InterPro" id="IPR050138">
    <property type="entry name" value="DHOase/Allantoinase_Hydrolase"/>
</dbReference>
<dbReference type="InterPro" id="IPR002195">
    <property type="entry name" value="Dihydroorotase_CS"/>
</dbReference>
<dbReference type="InterPro" id="IPR011059">
    <property type="entry name" value="Metal-dep_hydrolase_composite"/>
</dbReference>
<dbReference type="InterPro" id="IPR032466">
    <property type="entry name" value="Metal_Hydrolase"/>
</dbReference>
<dbReference type="NCBIfam" id="NF006837">
    <property type="entry name" value="PRK09357.1-2"/>
    <property type="match status" value="1"/>
</dbReference>
<dbReference type="NCBIfam" id="TIGR00857">
    <property type="entry name" value="pyrC_multi"/>
    <property type="match status" value="1"/>
</dbReference>
<dbReference type="PANTHER" id="PTHR43668">
    <property type="entry name" value="ALLANTOINASE"/>
    <property type="match status" value="1"/>
</dbReference>
<dbReference type="PANTHER" id="PTHR43668:SF2">
    <property type="entry name" value="ALLANTOINASE"/>
    <property type="match status" value="1"/>
</dbReference>
<dbReference type="Pfam" id="PF01979">
    <property type="entry name" value="Amidohydro_1"/>
    <property type="match status" value="1"/>
</dbReference>
<dbReference type="SUPFAM" id="SSF51338">
    <property type="entry name" value="Composite domain of metallo-dependent hydrolases"/>
    <property type="match status" value="1"/>
</dbReference>
<dbReference type="SUPFAM" id="SSF51556">
    <property type="entry name" value="Metallo-dependent hydrolases"/>
    <property type="match status" value="1"/>
</dbReference>
<dbReference type="PROSITE" id="PS00482">
    <property type="entry name" value="DIHYDROOROTASE_1"/>
    <property type="match status" value="1"/>
</dbReference>
<dbReference type="PROSITE" id="PS00483">
    <property type="entry name" value="DIHYDROOROTASE_2"/>
    <property type="match status" value="1"/>
</dbReference>
<reference key="1">
    <citation type="journal article" date="2004" name="Proc. Natl. Acad. Sci. U.S.A.">
        <title>Complete genomes of two clinical Staphylococcus aureus strains: evidence for the rapid evolution of virulence and drug resistance.</title>
        <authorList>
            <person name="Holden M.T.G."/>
            <person name="Feil E.J."/>
            <person name="Lindsay J.A."/>
            <person name="Peacock S.J."/>
            <person name="Day N.P.J."/>
            <person name="Enright M.C."/>
            <person name="Foster T.J."/>
            <person name="Moore C.E."/>
            <person name="Hurst L."/>
            <person name="Atkin R."/>
            <person name="Barron A."/>
            <person name="Bason N."/>
            <person name="Bentley S.D."/>
            <person name="Chillingworth C."/>
            <person name="Chillingworth T."/>
            <person name="Churcher C."/>
            <person name="Clark L."/>
            <person name="Corton C."/>
            <person name="Cronin A."/>
            <person name="Doggett J."/>
            <person name="Dowd L."/>
            <person name="Feltwell T."/>
            <person name="Hance Z."/>
            <person name="Harris B."/>
            <person name="Hauser H."/>
            <person name="Holroyd S."/>
            <person name="Jagels K."/>
            <person name="James K.D."/>
            <person name="Lennard N."/>
            <person name="Line A."/>
            <person name="Mayes R."/>
            <person name="Moule S."/>
            <person name="Mungall K."/>
            <person name="Ormond D."/>
            <person name="Quail M.A."/>
            <person name="Rabbinowitsch E."/>
            <person name="Rutherford K.M."/>
            <person name="Sanders M."/>
            <person name="Sharp S."/>
            <person name="Simmonds M."/>
            <person name="Stevens K."/>
            <person name="Whitehead S."/>
            <person name="Barrell B.G."/>
            <person name="Spratt B.G."/>
            <person name="Parkhill J."/>
        </authorList>
    </citation>
    <scope>NUCLEOTIDE SEQUENCE [LARGE SCALE GENOMIC DNA]</scope>
    <source>
        <strain>MSSA476</strain>
    </source>
</reference>
<proteinExistence type="inferred from homology"/>
<accession>Q6GA12</accession>